<evidence type="ECO:0000255" key="1">
    <source>
        <dbReference type="HAMAP-Rule" id="MF_01615"/>
    </source>
</evidence>
<proteinExistence type="inferred from homology"/>
<keyword id="KW-0315">Glutamine amidotransferase</keyword>
<keyword id="KW-0378">Hydrolase</keyword>
<keyword id="KW-0456">Lyase</keyword>
<keyword id="KW-0663">Pyridoxal phosphate</keyword>
<keyword id="KW-1185">Reference proteome</keyword>
<feature type="chain" id="PRO_1000185884" description="Pyridoxal 5'-phosphate synthase subunit PdxT">
    <location>
        <begin position="1"/>
        <end position="189"/>
    </location>
</feature>
<feature type="active site" description="Nucleophile" evidence="1">
    <location>
        <position position="79"/>
    </location>
</feature>
<feature type="active site" description="Charge relay system" evidence="1">
    <location>
        <position position="171"/>
    </location>
</feature>
<feature type="active site" description="Charge relay system" evidence="1">
    <location>
        <position position="173"/>
    </location>
</feature>
<feature type="binding site" evidence="1">
    <location>
        <begin position="47"/>
        <end position="49"/>
    </location>
    <ligand>
        <name>L-glutamine</name>
        <dbReference type="ChEBI" id="CHEBI:58359"/>
    </ligand>
</feature>
<feature type="binding site" evidence="1">
    <location>
        <position position="106"/>
    </location>
    <ligand>
        <name>L-glutamine</name>
        <dbReference type="ChEBI" id="CHEBI:58359"/>
    </ligand>
</feature>
<feature type="binding site" evidence="1">
    <location>
        <begin position="135"/>
        <end position="136"/>
    </location>
    <ligand>
        <name>L-glutamine</name>
        <dbReference type="ChEBI" id="CHEBI:58359"/>
    </ligand>
</feature>
<accession>B1I158</accession>
<name>PDXT_DESAP</name>
<protein>
    <recommendedName>
        <fullName evidence="1">Pyridoxal 5'-phosphate synthase subunit PdxT</fullName>
        <ecNumber evidence="1">4.3.3.6</ecNumber>
    </recommendedName>
    <alternativeName>
        <fullName evidence="1">Pdx2</fullName>
    </alternativeName>
    <alternativeName>
        <fullName evidence="1">Pyridoxal 5'-phosphate synthase glutaminase subunit</fullName>
        <ecNumber evidence="1">3.5.1.2</ecNumber>
    </alternativeName>
</protein>
<sequence>MLKVGILALQGAFLEHARAVEACGALPVEIRKPGQLGDCRALIIPGGESTAIGKLMAAFDLLEPVRRFGAEGRPVFGTCAGMVLLAKDIEDSEQTRLGLMDITVRRNAFGRQVDSFEAKIHVPVLGDEPVRGVFIRAPHVTAVGPGVEILAAFEEKIILVRQDRLLAGAFHPELTADMRLHRYFLDFVD</sequence>
<reference key="1">
    <citation type="submission" date="2007-10" db="EMBL/GenBank/DDBJ databases">
        <title>Complete sequence of chromosome of Desulforudis audaxviator MP104C.</title>
        <authorList>
            <person name="Copeland A."/>
            <person name="Lucas S."/>
            <person name="Lapidus A."/>
            <person name="Barry K."/>
            <person name="Glavina del Rio T."/>
            <person name="Dalin E."/>
            <person name="Tice H."/>
            <person name="Bruce D."/>
            <person name="Pitluck S."/>
            <person name="Lowry S.R."/>
            <person name="Larimer F."/>
            <person name="Land M.L."/>
            <person name="Hauser L."/>
            <person name="Kyrpides N."/>
            <person name="Ivanova N.N."/>
            <person name="Richardson P."/>
        </authorList>
    </citation>
    <scope>NUCLEOTIDE SEQUENCE [LARGE SCALE GENOMIC DNA]</scope>
    <source>
        <strain>MP104C</strain>
    </source>
</reference>
<gene>
    <name evidence="1" type="primary">pdxT</name>
    <name type="ordered locus">Daud_0010</name>
</gene>
<organism>
    <name type="scientific">Desulforudis audaxviator (strain MP104C)</name>
    <dbReference type="NCBI Taxonomy" id="477974"/>
    <lineage>
        <taxon>Bacteria</taxon>
        <taxon>Bacillati</taxon>
        <taxon>Bacillota</taxon>
        <taxon>Clostridia</taxon>
        <taxon>Thermoanaerobacterales</taxon>
        <taxon>Candidatus Desulforudaceae</taxon>
        <taxon>Candidatus Desulforudis</taxon>
    </lineage>
</organism>
<dbReference type="EC" id="4.3.3.6" evidence="1"/>
<dbReference type="EC" id="3.5.1.2" evidence="1"/>
<dbReference type="EMBL" id="CP000860">
    <property type="protein sequence ID" value="ACA58579.1"/>
    <property type="molecule type" value="Genomic_DNA"/>
</dbReference>
<dbReference type="RefSeq" id="WP_012301173.1">
    <property type="nucleotide sequence ID" value="NC_010424.1"/>
</dbReference>
<dbReference type="SMR" id="B1I158"/>
<dbReference type="STRING" id="477974.Daud_0010"/>
<dbReference type="MEROPS" id="C26.A32"/>
<dbReference type="KEGG" id="dau:Daud_0010"/>
<dbReference type="eggNOG" id="COG0311">
    <property type="taxonomic scope" value="Bacteria"/>
</dbReference>
<dbReference type="HOGENOM" id="CLU_069674_2_0_9"/>
<dbReference type="OrthoDB" id="9810320at2"/>
<dbReference type="UniPathway" id="UPA00245"/>
<dbReference type="Proteomes" id="UP000008544">
    <property type="component" value="Chromosome"/>
</dbReference>
<dbReference type="GO" id="GO:0005829">
    <property type="term" value="C:cytosol"/>
    <property type="evidence" value="ECO:0007669"/>
    <property type="project" value="TreeGrafter"/>
</dbReference>
<dbReference type="GO" id="GO:1903600">
    <property type="term" value="C:glutaminase complex"/>
    <property type="evidence" value="ECO:0007669"/>
    <property type="project" value="TreeGrafter"/>
</dbReference>
<dbReference type="GO" id="GO:0004359">
    <property type="term" value="F:glutaminase activity"/>
    <property type="evidence" value="ECO:0007669"/>
    <property type="project" value="UniProtKB-UniRule"/>
</dbReference>
<dbReference type="GO" id="GO:0036381">
    <property type="term" value="F:pyridoxal 5'-phosphate synthase (glutamine hydrolysing) activity"/>
    <property type="evidence" value="ECO:0007669"/>
    <property type="project" value="UniProtKB-UniRule"/>
</dbReference>
<dbReference type="GO" id="GO:0006543">
    <property type="term" value="P:glutamine catabolic process"/>
    <property type="evidence" value="ECO:0007669"/>
    <property type="project" value="UniProtKB-UniRule"/>
</dbReference>
<dbReference type="GO" id="GO:0042823">
    <property type="term" value="P:pyridoxal phosphate biosynthetic process"/>
    <property type="evidence" value="ECO:0007669"/>
    <property type="project" value="UniProtKB-UniRule"/>
</dbReference>
<dbReference type="GO" id="GO:0008614">
    <property type="term" value="P:pyridoxine metabolic process"/>
    <property type="evidence" value="ECO:0007669"/>
    <property type="project" value="TreeGrafter"/>
</dbReference>
<dbReference type="CDD" id="cd01749">
    <property type="entry name" value="GATase1_PB"/>
    <property type="match status" value="1"/>
</dbReference>
<dbReference type="FunFam" id="3.40.50.880:FF:000010">
    <property type="entry name" value="uncharacterized protein LOC100176842 isoform X2"/>
    <property type="match status" value="1"/>
</dbReference>
<dbReference type="Gene3D" id="3.40.50.880">
    <property type="match status" value="1"/>
</dbReference>
<dbReference type="HAMAP" id="MF_01615">
    <property type="entry name" value="PdxT"/>
    <property type="match status" value="1"/>
</dbReference>
<dbReference type="InterPro" id="IPR029062">
    <property type="entry name" value="Class_I_gatase-like"/>
</dbReference>
<dbReference type="InterPro" id="IPR002161">
    <property type="entry name" value="PdxT/SNO"/>
</dbReference>
<dbReference type="InterPro" id="IPR021196">
    <property type="entry name" value="PdxT/SNO_CS"/>
</dbReference>
<dbReference type="NCBIfam" id="TIGR03800">
    <property type="entry name" value="PLP_synth_Pdx2"/>
    <property type="match status" value="1"/>
</dbReference>
<dbReference type="PANTHER" id="PTHR31559">
    <property type="entry name" value="PYRIDOXAL 5'-PHOSPHATE SYNTHASE SUBUNIT SNO"/>
    <property type="match status" value="1"/>
</dbReference>
<dbReference type="PANTHER" id="PTHR31559:SF0">
    <property type="entry name" value="PYRIDOXAL 5'-PHOSPHATE SYNTHASE SUBUNIT SNO1-RELATED"/>
    <property type="match status" value="1"/>
</dbReference>
<dbReference type="Pfam" id="PF01174">
    <property type="entry name" value="SNO"/>
    <property type="match status" value="1"/>
</dbReference>
<dbReference type="PIRSF" id="PIRSF005639">
    <property type="entry name" value="Glut_amidoT_SNO"/>
    <property type="match status" value="1"/>
</dbReference>
<dbReference type="SUPFAM" id="SSF52317">
    <property type="entry name" value="Class I glutamine amidotransferase-like"/>
    <property type="match status" value="1"/>
</dbReference>
<dbReference type="PROSITE" id="PS01236">
    <property type="entry name" value="PDXT_SNO_1"/>
    <property type="match status" value="1"/>
</dbReference>
<dbReference type="PROSITE" id="PS51130">
    <property type="entry name" value="PDXT_SNO_2"/>
    <property type="match status" value="1"/>
</dbReference>
<comment type="function">
    <text evidence="1">Catalyzes the hydrolysis of glutamine to glutamate and ammonia as part of the biosynthesis of pyridoxal 5'-phosphate. The resulting ammonia molecule is channeled to the active site of PdxS.</text>
</comment>
<comment type="catalytic activity">
    <reaction evidence="1">
        <text>aldehydo-D-ribose 5-phosphate + D-glyceraldehyde 3-phosphate + L-glutamine = pyridoxal 5'-phosphate + L-glutamate + phosphate + 3 H2O + H(+)</text>
        <dbReference type="Rhea" id="RHEA:31507"/>
        <dbReference type="ChEBI" id="CHEBI:15377"/>
        <dbReference type="ChEBI" id="CHEBI:15378"/>
        <dbReference type="ChEBI" id="CHEBI:29985"/>
        <dbReference type="ChEBI" id="CHEBI:43474"/>
        <dbReference type="ChEBI" id="CHEBI:58273"/>
        <dbReference type="ChEBI" id="CHEBI:58359"/>
        <dbReference type="ChEBI" id="CHEBI:59776"/>
        <dbReference type="ChEBI" id="CHEBI:597326"/>
        <dbReference type="EC" id="4.3.3.6"/>
    </reaction>
</comment>
<comment type="catalytic activity">
    <reaction evidence="1">
        <text>L-glutamine + H2O = L-glutamate + NH4(+)</text>
        <dbReference type="Rhea" id="RHEA:15889"/>
        <dbReference type="ChEBI" id="CHEBI:15377"/>
        <dbReference type="ChEBI" id="CHEBI:28938"/>
        <dbReference type="ChEBI" id="CHEBI:29985"/>
        <dbReference type="ChEBI" id="CHEBI:58359"/>
        <dbReference type="EC" id="3.5.1.2"/>
    </reaction>
</comment>
<comment type="pathway">
    <text evidence="1">Cofactor biosynthesis; pyridoxal 5'-phosphate biosynthesis.</text>
</comment>
<comment type="subunit">
    <text evidence="1">In the presence of PdxS, forms a dodecamer of heterodimers. Only shows activity in the heterodimer.</text>
</comment>
<comment type="similarity">
    <text evidence="1">Belongs to the glutaminase PdxT/SNO family.</text>
</comment>